<feature type="chain" id="PRO_0000138982" description="Multifunctional CCA protein">
    <location>
        <begin position="1"/>
        <end position="410"/>
    </location>
</feature>
<feature type="domain" description="HD" evidence="1">
    <location>
        <begin position="228"/>
        <end position="329"/>
    </location>
</feature>
<feature type="binding site" evidence="1">
    <location>
        <position position="8"/>
    </location>
    <ligand>
        <name>ATP</name>
        <dbReference type="ChEBI" id="CHEBI:30616"/>
    </ligand>
</feature>
<feature type="binding site" evidence="1">
    <location>
        <position position="8"/>
    </location>
    <ligand>
        <name>CTP</name>
        <dbReference type="ChEBI" id="CHEBI:37563"/>
    </ligand>
</feature>
<feature type="binding site" evidence="1">
    <location>
        <position position="11"/>
    </location>
    <ligand>
        <name>ATP</name>
        <dbReference type="ChEBI" id="CHEBI:30616"/>
    </ligand>
</feature>
<feature type="binding site" evidence="1">
    <location>
        <position position="11"/>
    </location>
    <ligand>
        <name>CTP</name>
        <dbReference type="ChEBI" id="CHEBI:37563"/>
    </ligand>
</feature>
<feature type="binding site" evidence="1">
    <location>
        <position position="21"/>
    </location>
    <ligand>
        <name>Mg(2+)</name>
        <dbReference type="ChEBI" id="CHEBI:18420"/>
    </ligand>
</feature>
<feature type="binding site" evidence="1">
    <location>
        <position position="23"/>
    </location>
    <ligand>
        <name>Mg(2+)</name>
        <dbReference type="ChEBI" id="CHEBI:18420"/>
    </ligand>
</feature>
<feature type="binding site" evidence="1">
    <location>
        <position position="91"/>
    </location>
    <ligand>
        <name>ATP</name>
        <dbReference type="ChEBI" id="CHEBI:30616"/>
    </ligand>
</feature>
<feature type="binding site" evidence="1">
    <location>
        <position position="91"/>
    </location>
    <ligand>
        <name>CTP</name>
        <dbReference type="ChEBI" id="CHEBI:37563"/>
    </ligand>
</feature>
<feature type="binding site" evidence="1">
    <location>
        <position position="137"/>
    </location>
    <ligand>
        <name>ATP</name>
        <dbReference type="ChEBI" id="CHEBI:30616"/>
    </ligand>
</feature>
<feature type="binding site" evidence="1">
    <location>
        <position position="137"/>
    </location>
    <ligand>
        <name>CTP</name>
        <dbReference type="ChEBI" id="CHEBI:37563"/>
    </ligand>
</feature>
<feature type="binding site" evidence="1">
    <location>
        <position position="140"/>
    </location>
    <ligand>
        <name>ATP</name>
        <dbReference type="ChEBI" id="CHEBI:30616"/>
    </ligand>
</feature>
<feature type="binding site" evidence="1">
    <location>
        <position position="140"/>
    </location>
    <ligand>
        <name>CTP</name>
        <dbReference type="ChEBI" id="CHEBI:37563"/>
    </ligand>
</feature>
<sequence>MKVYLVGGAVRDRLLGIPVQEQDWVVVGATPEELLKRKYRQVGRDFPVFLHPETKEEYALARTERKSAPGYYGFICDFSESVTLEEDLARRDLTINAMAMDEQGNLIDPYQGQRDLEEKLLRHVSSAFVEDPVRVLRVARFASRFHHLGFRIANETRLLMYSMVKQGELAHLIPERVWQEWQKSLEEKNPEQFILSLRSCDALRVILPEINSLFGVPNPHQYHQEIDTGIHSLMTLRASSELSEEPLVRFAALVHDLGKASTPIQAWPKHHGHEEEGTKLIRALCARLRIPNDYRDLAVTVARAHLNIHRLCELRPNTIVKLLEQVDAFRRPQLFHKILIACQADAESCGKTVVYRQTQLWNEILSECVKVTPQTFIVQGYEGKAIKEAMHQSRVACVERIMTSWKSNEK</sequence>
<name>CCA_LEGPH</name>
<reference key="1">
    <citation type="journal article" date="2004" name="Science">
        <title>The genomic sequence of the accidental pathogen Legionella pneumophila.</title>
        <authorList>
            <person name="Chien M."/>
            <person name="Morozova I."/>
            <person name="Shi S."/>
            <person name="Sheng H."/>
            <person name="Chen J."/>
            <person name="Gomez S.M."/>
            <person name="Asamani G."/>
            <person name="Hill K."/>
            <person name="Nuara J."/>
            <person name="Feder M."/>
            <person name="Rineer J."/>
            <person name="Greenberg J.J."/>
            <person name="Steshenko V."/>
            <person name="Park S.H."/>
            <person name="Zhao B."/>
            <person name="Teplitskaya E."/>
            <person name="Edwards J.R."/>
            <person name="Pampou S."/>
            <person name="Georghiou A."/>
            <person name="Chou I.-C."/>
            <person name="Iannuccilli W."/>
            <person name="Ulz M.E."/>
            <person name="Kim D.H."/>
            <person name="Geringer-Sameth A."/>
            <person name="Goldsberry C."/>
            <person name="Morozov P."/>
            <person name="Fischer S.G."/>
            <person name="Segal G."/>
            <person name="Qu X."/>
            <person name="Rzhetsky A."/>
            <person name="Zhang P."/>
            <person name="Cayanis E."/>
            <person name="De Jong P.J."/>
            <person name="Ju J."/>
            <person name="Kalachikov S."/>
            <person name="Shuman H.A."/>
            <person name="Russo J.J."/>
        </authorList>
    </citation>
    <scope>NUCLEOTIDE SEQUENCE [LARGE SCALE GENOMIC DNA]</scope>
    <source>
        <strain>Philadelphia 1 / ATCC 33152 / DSM 7513</strain>
    </source>
</reference>
<dbReference type="EC" id="2.7.7.72" evidence="1"/>
<dbReference type="EC" id="3.1.3.-" evidence="1"/>
<dbReference type="EC" id="3.1.4.-" evidence="1"/>
<dbReference type="EMBL" id="AE017354">
    <property type="protein sequence ID" value="AAU28798.1"/>
    <property type="status" value="ALT_INIT"/>
    <property type="molecule type" value="Genomic_DNA"/>
</dbReference>
<dbReference type="RefSeq" id="WP_010948440.1">
    <property type="nucleotide sequence ID" value="NC_002942.5"/>
</dbReference>
<dbReference type="RefSeq" id="YP_096745.2">
    <property type="nucleotide sequence ID" value="NC_002942.5"/>
</dbReference>
<dbReference type="SMR" id="Q5ZRX9"/>
<dbReference type="STRING" id="272624.lpg2742"/>
<dbReference type="PaxDb" id="272624-lpg2742"/>
<dbReference type="KEGG" id="lpn:lpg2742"/>
<dbReference type="PATRIC" id="fig|272624.6.peg.2929"/>
<dbReference type="eggNOG" id="COG0617">
    <property type="taxonomic scope" value="Bacteria"/>
</dbReference>
<dbReference type="HOGENOM" id="CLU_015961_1_1_6"/>
<dbReference type="OrthoDB" id="9805698at2"/>
<dbReference type="Proteomes" id="UP000000609">
    <property type="component" value="Chromosome"/>
</dbReference>
<dbReference type="GO" id="GO:0005524">
    <property type="term" value="F:ATP binding"/>
    <property type="evidence" value="ECO:0007669"/>
    <property type="project" value="UniProtKB-UniRule"/>
</dbReference>
<dbReference type="GO" id="GO:0004810">
    <property type="term" value="F:CCA tRNA nucleotidyltransferase activity"/>
    <property type="evidence" value="ECO:0007669"/>
    <property type="project" value="UniProtKB-UniRule"/>
</dbReference>
<dbReference type="GO" id="GO:0004112">
    <property type="term" value="F:cyclic-nucleotide phosphodiesterase activity"/>
    <property type="evidence" value="ECO:0007669"/>
    <property type="project" value="UniProtKB-UniRule"/>
</dbReference>
<dbReference type="GO" id="GO:0000287">
    <property type="term" value="F:magnesium ion binding"/>
    <property type="evidence" value="ECO:0007669"/>
    <property type="project" value="UniProtKB-UniRule"/>
</dbReference>
<dbReference type="GO" id="GO:0016791">
    <property type="term" value="F:phosphatase activity"/>
    <property type="evidence" value="ECO:0007669"/>
    <property type="project" value="UniProtKB-UniRule"/>
</dbReference>
<dbReference type="GO" id="GO:0000049">
    <property type="term" value="F:tRNA binding"/>
    <property type="evidence" value="ECO:0007669"/>
    <property type="project" value="UniProtKB-UniRule"/>
</dbReference>
<dbReference type="GO" id="GO:0042245">
    <property type="term" value="P:RNA repair"/>
    <property type="evidence" value="ECO:0007669"/>
    <property type="project" value="UniProtKB-KW"/>
</dbReference>
<dbReference type="GO" id="GO:0001680">
    <property type="term" value="P:tRNA 3'-terminal CCA addition"/>
    <property type="evidence" value="ECO:0007669"/>
    <property type="project" value="UniProtKB-UniRule"/>
</dbReference>
<dbReference type="CDD" id="cd00077">
    <property type="entry name" value="HDc"/>
    <property type="match status" value="1"/>
</dbReference>
<dbReference type="CDD" id="cd05398">
    <property type="entry name" value="NT_ClassII-CCAase"/>
    <property type="match status" value="1"/>
</dbReference>
<dbReference type="Gene3D" id="3.30.460.10">
    <property type="entry name" value="Beta Polymerase, domain 2"/>
    <property type="match status" value="1"/>
</dbReference>
<dbReference type="Gene3D" id="1.10.3090.10">
    <property type="entry name" value="cca-adding enzyme, domain 2"/>
    <property type="match status" value="1"/>
</dbReference>
<dbReference type="HAMAP" id="MF_01261">
    <property type="entry name" value="CCA_bact_type1"/>
    <property type="match status" value="1"/>
</dbReference>
<dbReference type="HAMAP" id="MF_01262">
    <property type="entry name" value="CCA_bact_type2"/>
    <property type="match status" value="1"/>
</dbReference>
<dbReference type="InterPro" id="IPR012006">
    <property type="entry name" value="CCA_bact"/>
</dbReference>
<dbReference type="InterPro" id="IPR003607">
    <property type="entry name" value="HD/PDEase_dom"/>
</dbReference>
<dbReference type="InterPro" id="IPR006674">
    <property type="entry name" value="HD_domain"/>
</dbReference>
<dbReference type="InterPro" id="IPR043519">
    <property type="entry name" value="NT_sf"/>
</dbReference>
<dbReference type="InterPro" id="IPR002646">
    <property type="entry name" value="PolA_pol_head_dom"/>
</dbReference>
<dbReference type="InterPro" id="IPR032828">
    <property type="entry name" value="PolyA_RNA-bd"/>
</dbReference>
<dbReference type="InterPro" id="IPR050124">
    <property type="entry name" value="tRNA_CCA-adding_enzyme"/>
</dbReference>
<dbReference type="NCBIfam" id="NF008137">
    <property type="entry name" value="PRK10885.1"/>
    <property type="match status" value="1"/>
</dbReference>
<dbReference type="PANTHER" id="PTHR47545">
    <property type="entry name" value="MULTIFUNCTIONAL CCA PROTEIN"/>
    <property type="match status" value="1"/>
</dbReference>
<dbReference type="PANTHER" id="PTHR47545:SF1">
    <property type="entry name" value="MULTIFUNCTIONAL CCA PROTEIN"/>
    <property type="match status" value="1"/>
</dbReference>
<dbReference type="Pfam" id="PF01966">
    <property type="entry name" value="HD"/>
    <property type="match status" value="1"/>
</dbReference>
<dbReference type="Pfam" id="PF01743">
    <property type="entry name" value="PolyA_pol"/>
    <property type="match status" value="1"/>
</dbReference>
<dbReference type="Pfam" id="PF12627">
    <property type="entry name" value="PolyA_pol_RNAbd"/>
    <property type="match status" value="1"/>
</dbReference>
<dbReference type="PIRSF" id="PIRSF000813">
    <property type="entry name" value="CCA_bact"/>
    <property type="match status" value="1"/>
</dbReference>
<dbReference type="SUPFAM" id="SSF81301">
    <property type="entry name" value="Nucleotidyltransferase"/>
    <property type="match status" value="1"/>
</dbReference>
<dbReference type="SUPFAM" id="SSF81891">
    <property type="entry name" value="Poly A polymerase C-terminal region-like"/>
    <property type="match status" value="1"/>
</dbReference>
<dbReference type="PROSITE" id="PS51831">
    <property type="entry name" value="HD"/>
    <property type="match status" value="1"/>
</dbReference>
<proteinExistence type="inferred from homology"/>
<keyword id="KW-0067">ATP-binding</keyword>
<keyword id="KW-0378">Hydrolase</keyword>
<keyword id="KW-0460">Magnesium</keyword>
<keyword id="KW-0479">Metal-binding</keyword>
<keyword id="KW-0511">Multifunctional enzyme</keyword>
<keyword id="KW-0533">Nickel</keyword>
<keyword id="KW-0547">Nucleotide-binding</keyword>
<keyword id="KW-0548">Nucleotidyltransferase</keyword>
<keyword id="KW-1185">Reference proteome</keyword>
<keyword id="KW-0692">RNA repair</keyword>
<keyword id="KW-0694">RNA-binding</keyword>
<keyword id="KW-0808">Transferase</keyword>
<keyword id="KW-0819">tRNA processing</keyword>
<protein>
    <recommendedName>
        <fullName evidence="1">Multifunctional CCA protein</fullName>
    </recommendedName>
    <domain>
        <recommendedName>
            <fullName evidence="1">CCA-adding enzyme</fullName>
            <ecNumber evidence="1">2.7.7.72</ecNumber>
        </recommendedName>
        <alternativeName>
            <fullName evidence="1">CCA tRNA nucleotidyltransferase</fullName>
        </alternativeName>
        <alternativeName>
            <fullName evidence="1">tRNA CCA-pyrophosphorylase</fullName>
        </alternativeName>
        <alternativeName>
            <fullName evidence="1">tRNA adenylyl-/cytidylyl-transferase</fullName>
        </alternativeName>
        <alternativeName>
            <fullName evidence="1">tRNA nucleotidyltransferase</fullName>
        </alternativeName>
        <alternativeName>
            <fullName evidence="1">tRNA-NT</fullName>
        </alternativeName>
    </domain>
    <domain>
        <recommendedName>
            <fullName evidence="1">2'-nucleotidase</fullName>
            <ecNumber evidence="1">3.1.3.-</ecNumber>
        </recommendedName>
    </domain>
    <domain>
        <recommendedName>
            <fullName evidence="1">2',3'-cyclic phosphodiesterase</fullName>
            <ecNumber evidence="1">3.1.4.-</ecNumber>
        </recommendedName>
    </domain>
    <domain>
        <recommendedName>
            <fullName evidence="1">Phosphatase</fullName>
            <ecNumber evidence="1">3.1.3.-</ecNumber>
        </recommendedName>
    </domain>
</protein>
<evidence type="ECO:0000255" key="1">
    <source>
        <dbReference type="HAMAP-Rule" id="MF_01261"/>
    </source>
</evidence>
<evidence type="ECO:0000305" key="2"/>
<accession>Q5ZRX9</accession>
<comment type="function">
    <text evidence="1">Catalyzes the addition and repair of the essential 3'-terminal CCA sequence in tRNAs without using a nucleic acid template. Adds these three nucleotides in the order of C, C, and A to the tRNA nucleotide-73, using CTP and ATP as substrates and producing inorganic pyrophosphate. tRNA 3'-terminal CCA addition is required both for tRNA processing and repair. Also involved in tRNA surveillance by mediating tandem CCA addition to generate a CCACCA at the 3' terminus of unstable tRNAs. While stable tRNAs receive only 3'-terminal CCA, unstable tRNAs are marked with CCACCA and rapidly degraded.</text>
</comment>
<comment type="catalytic activity">
    <reaction evidence="1">
        <text>a tRNA precursor + 2 CTP + ATP = a tRNA with a 3' CCA end + 3 diphosphate</text>
        <dbReference type="Rhea" id="RHEA:14433"/>
        <dbReference type="Rhea" id="RHEA-COMP:10465"/>
        <dbReference type="Rhea" id="RHEA-COMP:10468"/>
        <dbReference type="ChEBI" id="CHEBI:30616"/>
        <dbReference type="ChEBI" id="CHEBI:33019"/>
        <dbReference type="ChEBI" id="CHEBI:37563"/>
        <dbReference type="ChEBI" id="CHEBI:74896"/>
        <dbReference type="ChEBI" id="CHEBI:83071"/>
        <dbReference type="EC" id="2.7.7.72"/>
    </reaction>
</comment>
<comment type="catalytic activity">
    <reaction evidence="1">
        <text>a tRNA with a 3' CCA end + 2 CTP + ATP = a tRNA with a 3' CCACCA end + 3 diphosphate</text>
        <dbReference type="Rhea" id="RHEA:76235"/>
        <dbReference type="Rhea" id="RHEA-COMP:10468"/>
        <dbReference type="Rhea" id="RHEA-COMP:18655"/>
        <dbReference type="ChEBI" id="CHEBI:30616"/>
        <dbReference type="ChEBI" id="CHEBI:33019"/>
        <dbReference type="ChEBI" id="CHEBI:37563"/>
        <dbReference type="ChEBI" id="CHEBI:83071"/>
        <dbReference type="ChEBI" id="CHEBI:195187"/>
    </reaction>
    <physiologicalReaction direction="left-to-right" evidence="1">
        <dbReference type="Rhea" id="RHEA:76236"/>
    </physiologicalReaction>
</comment>
<comment type="cofactor">
    <cofactor evidence="1">
        <name>Mg(2+)</name>
        <dbReference type="ChEBI" id="CHEBI:18420"/>
    </cofactor>
    <text evidence="1">Magnesium is required for nucleotidyltransferase activity.</text>
</comment>
<comment type="cofactor">
    <cofactor evidence="1">
        <name>Ni(2+)</name>
        <dbReference type="ChEBI" id="CHEBI:49786"/>
    </cofactor>
    <text evidence="1">Nickel for phosphatase activity.</text>
</comment>
<comment type="subunit">
    <text evidence="1">Monomer. Can also form homodimers and oligomers.</text>
</comment>
<comment type="domain">
    <text evidence="1">Comprises two domains: an N-terminal domain containing the nucleotidyltransferase activity and a C-terminal HD domain associated with both phosphodiesterase and phosphatase activities.</text>
</comment>
<comment type="miscellaneous">
    <text evidence="1">A single active site specifically recognizes both ATP and CTP and is responsible for their addition.</text>
</comment>
<comment type="similarity">
    <text evidence="1">Belongs to the tRNA nucleotidyltransferase/poly(A) polymerase family. Bacterial CCA-adding enzyme type 1 subfamily.</text>
</comment>
<comment type="sequence caution" evidence="2">
    <conflict type="erroneous initiation">
        <sequence resource="EMBL-CDS" id="AAU28798"/>
    </conflict>
</comment>
<organism>
    <name type="scientific">Legionella pneumophila subsp. pneumophila (strain Philadelphia 1 / ATCC 33152 / DSM 7513)</name>
    <dbReference type="NCBI Taxonomy" id="272624"/>
    <lineage>
        <taxon>Bacteria</taxon>
        <taxon>Pseudomonadati</taxon>
        <taxon>Pseudomonadota</taxon>
        <taxon>Gammaproteobacteria</taxon>
        <taxon>Legionellales</taxon>
        <taxon>Legionellaceae</taxon>
        <taxon>Legionella</taxon>
    </lineage>
</organism>
<gene>
    <name evidence="1" type="primary">cca</name>
    <name type="ordered locus">lpg2742</name>
</gene>